<reference key="1">
    <citation type="journal article" date="1997" name="Nature">
        <title>Genomic sequence of a Lyme disease spirochaete, Borrelia burgdorferi.</title>
        <authorList>
            <person name="Fraser C.M."/>
            <person name="Casjens S."/>
            <person name="Huang W.M."/>
            <person name="Sutton G.G."/>
            <person name="Clayton R.A."/>
            <person name="Lathigra R."/>
            <person name="White O."/>
            <person name="Ketchum K.A."/>
            <person name="Dodson R.J."/>
            <person name="Hickey E.K."/>
            <person name="Gwinn M.L."/>
            <person name="Dougherty B.A."/>
            <person name="Tomb J.-F."/>
            <person name="Fleischmann R.D."/>
            <person name="Richardson D.L."/>
            <person name="Peterson J.D."/>
            <person name="Kerlavage A.R."/>
            <person name="Quackenbush J."/>
            <person name="Salzberg S.L."/>
            <person name="Hanson M."/>
            <person name="van Vugt R."/>
            <person name="Palmer N."/>
            <person name="Adams M.D."/>
            <person name="Gocayne J.D."/>
            <person name="Weidman J.F."/>
            <person name="Utterback T.R."/>
            <person name="Watthey L."/>
            <person name="McDonald L.A."/>
            <person name="Artiach P."/>
            <person name="Bowman C."/>
            <person name="Garland S.A."/>
            <person name="Fujii C."/>
            <person name="Cotton M.D."/>
            <person name="Horst K."/>
            <person name="Roberts K.M."/>
            <person name="Hatch B."/>
            <person name="Smith H.O."/>
            <person name="Venter J.C."/>
        </authorList>
    </citation>
    <scope>NUCLEOTIDE SEQUENCE [LARGE SCALE GENOMIC DNA]</scope>
    <source>
        <strain>ATCC 35210 / DSM 4680 / CIP 102532 / B31</strain>
    </source>
</reference>
<evidence type="ECO:0000255" key="1">
    <source>
        <dbReference type="HAMAP-Rule" id="MF_00948"/>
    </source>
</evidence>
<feature type="chain" id="PRO_0000113917" description="Transcription termination/antitermination protein NusG">
    <location>
        <begin position="1"/>
        <end position="184"/>
    </location>
</feature>
<proteinExistence type="inferred from homology"/>
<sequence length="184" mass="21216">MSRAWYVVQTYSQYEKKIEQDIRLLINEGVFGGVVLDVKAPIEKVEEIRNGKKRIRERKIWPGYILIELDLPEVGWKDIIANIIKVQGVINFVGVSKGQRPIPINDEEVKSVFMLTGEIKANKSIFMLYDFEEGERVRIKGGPFDSFEGLISSIDYERKKLKVAVQIFGRSTPVEVDFQHIEKI</sequence>
<name>NUSG_BORBU</name>
<protein>
    <recommendedName>
        <fullName evidence="1">Transcription termination/antitermination protein NusG</fullName>
    </recommendedName>
</protein>
<gene>
    <name evidence="1" type="primary">nusG</name>
    <name type="ordered locus">BB_0394</name>
</gene>
<comment type="function">
    <text evidence="1">Participates in transcription elongation, termination and antitermination.</text>
</comment>
<comment type="similarity">
    <text evidence="1">Belongs to the NusG family.</text>
</comment>
<accession>O51355</accession>
<keyword id="KW-1185">Reference proteome</keyword>
<keyword id="KW-0804">Transcription</keyword>
<keyword id="KW-0889">Transcription antitermination</keyword>
<keyword id="KW-0805">Transcription regulation</keyword>
<keyword id="KW-0806">Transcription termination</keyword>
<dbReference type="EMBL" id="AE000783">
    <property type="protein sequence ID" value="AAC66771.1"/>
    <property type="molecule type" value="Genomic_DNA"/>
</dbReference>
<dbReference type="PIR" id="A70149">
    <property type="entry name" value="A70149"/>
</dbReference>
<dbReference type="RefSeq" id="NP_212528.1">
    <property type="nucleotide sequence ID" value="NC_001318.1"/>
</dbReference>
<dbReference type="RefSeq" id="WP_002657855.1">
    <property type="nucleotide sequence ID" value="NC_001318.1"/>
</dbReference>
<dbReference type="SMR" id="O51355"/>
<dbReference type="STRING" id="224326.BB_0394"/>
<dbReference type="PaxDb" id="224326-BB_0394"/>
<dbReference type="EnsemblBacteria" id="AAC66771">
    <property type="protein sequence ID" value="AAC66771"/>
    <property type="gene ID" value="BB_0394"/>
</dbReference>
<dbReference type="GeneID" id="56567822"/>
<dbReference type="KEGG" id="bbu:BB_0394"/>
<dbReference type="PATRIC" id="fig|224326.49.peg.789"/>
<dbReference type="HOGENOM" id="CLU_067287_1_0_12"/>
<dbReference type="OrthoDB" id="9809075at2"/>
<dbReference type="Proteomes" id="UP000001807">
    <property type="component" value="Chromosome"/>
</dbReference>
<dbReference type="GO" id="GO:0005829">
    <property type="term" value="C:cytosol"/>
    <property type="evidence" value="ECO:0000314"/>
    <property type="project" value="CAFA"/>
</dbReference>
<dbReference type="GO" id="GO:0006353">
    <property type="term" value="P:DNA-templated transcription termination"/>
    <property type="evidence" value="ECO:0007669"/>
    <property type="project" value="UniProtKB-UniRule"/>
</dbReference>
<dbReference type="GO" id="GO:0032784">
    <property type="term" value="P:regulation of DNA-templated transcription elongation"/>
    <property type="evidence" value="ECO:0007669"/>
    <property type="project" value="InterPro"/>
</dbReference>
<dbReference type="GO" id="GO:0031564">
    <property type="term" value="P:transcription antitermination"/>
    <property type="evidence" value="ECO:0007669"/>
    <property type="project" value="UniProtKB-UniRule"/>
</dbReference>
<dbReference type="GO" id="GO:0140673">
    <property type="term" value="P:transcription elongation-coupled chromatin remodeling"/>
    <property type="evidence" value="ECO:0007669"/>
    <property type="project" value="InterPro"/>
</dbReference>
<dbReference type="CDD" id="cd06091">
    <property type="entry name" value="KOW_NusG"/>
    <property type="match status" value="1"/>
</dbReference>
<dbReference type="CDD" id="cd09891">
    <property type="entry name" value="NGN_Bact_1"/>
    <property type="match status" value="1"/>
</dbReference>
<dbReference type="FunFam" id="2.30.30.30:FF:000002">
    <property type="entry name" value="Transcription termination/antitermination factor NusG"/>
    <property type="match status" value="1"/>
</dbReference>
<dbReference type="Gene3D" id="2.30.30.30">
    <property type="match status" value="1"/>
</dbReference>
<dbReference type="Gene3D" id="3.30.70.940">
    <property type="entry name" value="NusG, N-terminal domain"/>
    <property type="match status" value="1"/>
</dbReference>
<dbReference type="HAMAP" id="MF_00948">
    <property type="entry name" value="NusG"/>
    <property type="match status" value="1"/>
</dbReference>
<dbReference type="InterPro" id="IPR005824">
    <property type="entry name" value="KOW"/>
</dbReference>
<dbReference type="InterPro" id="IPR047050">
    <property type="entry name" value="NGN"/>
</dbReference>
<dbReference type="InterPro" id="IPR006645">
    <property type="entry name" value="NGN-like_dom"/>
</dbReference>
<dbReference type="InterPro" id="IPR036735">
    <property type="entry name" value="NGN_dom_sf"/>
</dbReference>
<dbReference type="InterPro" id="IPR043425">
    <property type="entry name" value="NusG-like"/>
</dbReference>
<dbReference type="InterPro" id="IPR014722">
    <property type="entry name" value="Rib_uL2_dom2"/>
</dbReference>
<dbReference type="InterPro" id="IPR001062">
    <property type="entry name" value="Transcrpt_antiterm_NusG"/>
</dbReference>
<dbReference type="InterPro" id="IPR015869">
    <property type="entry name" value="Transcrpt_antiterm_NusG_bac_CS"/>
</dbReference>
<dbReference type="InterPro" id="IPR008991">
    <property type="entry name" value="Translation_prot_SH3-like_sf"/>
</dbReference>
<dbReference type="NCBIfam" id="TIGR00922">
    <property type="entry name" value="nusG"/>
    <property type="match status" value="1"/>
</dbReference>
<dbReference type="PANTHER" id="PTHR30265">
    <property type="entry name" value="RHO-INTERACTING TRANSCRIPTION TERMINATION FACTOR NUSG"/>
    <property type="match status" value="1"/>
</dbReference>
<dbReference type="PANTHER" id="PTHR30265:SF2">
    <property type="entry name" value="TRANSCRIPTION TERMINATION_ANTITERMINATION PROTEIN NUSG"/>
    <property type="match status" value="1"/>
</dbReference>
<dbReference type="Pfam" id="PF02357">
    <property type="entry name" value="NusG"/>
    <property type="match status" value="1"/>
</dbReference>
<dbReference type="PRINTS" id="PR00338">
    <property type="entry name" value="NUSGTNSCPFCT"/>
</dbReference>
<dbReference type="SMART" id="SM00739">
    <property type="entry name" value="KOW"/>
    <property type="match status" value="1"/>
</dbReference>
<dbReference type="SMART" id="SM00738">
    <property type="entry name" value="NGN"/>
    <property type="match status" value="1"/>
</dbReference>
<dbReference type="SUPFAM" id="SSF82679">
    <property type="entry name" value="N-utilization substance G protein NusG, N-terminal domain"/>
    <property type="match status" value="1"/>
</dbReference>
<dbReference type="SUPFAM" id="SSF50104">
    <property type="entry name" value="Translation proteins SH3-like domain"/>
    <property type="match status" value="1"/>
</dbReference>
<dbReference type="PROSITE" id="PS01014">
    <property type="entry name" value="NUSG"/>
    <property type="match status" value="1"/>
</dbReference>
<organism>
    <name type="scientific">Borreliella burgdorferi (strain ATCC 35210 / DSM 4680 / CIP 102532 / B31)</name>
    <name type="common">Borrelia burgdorferi</name>
    <dbReference type="NCBI Taxonomy" id="224326"/>
    <lineage>
        <taxon>Bacteria</taxon>
        <taxon>Pseudomonadati</taxon>
        <taxon>Spirochaetota</taxon>
        <taxon>Spirochaetia</taxon>
        <taxon>Spirochaetales</taxon>
        <taxon>Borreliaceae</taxon>
        <taxon>Borreliella</taxon>
    </lineage>
</organism>